<feature type="chain" id="PRO_1000199392" description="Proline--tRNA ligase">
    <location>
        <begin position="1"/>
        <end position="577"/>
    </location>
</feature>
<proteinExistence type="inferred from homology"/>
<dbReference type="EC" id="6.1.1.15" evidence="1"/>
<dbReference type="EMBL" id="CP001217">
    <property type="protein sequence ID" value="ACJ07397.1"/>
    <property type="molecule type" value="Genomic_DNA"/>
</dbReference>
<dbReference type="SMR" id="B6JKG9"/>
<dbReference type="KEGG" id="hpp:HPP12_0238"/>
<dbReference type="HOGENOM" id="CLU_016739_0_0_7"/>
<dbReference type="Proteomes" id="UP000008198">
    <property type="component" value="Chromosome"/>
</dbReference>
<dbReference type="GO" id="GO:0005829">
    <property type="term" value="C:cytosol"/>
    <property type="evidence" value="ECO:0007669"/>
    <property type="project" value="TreeGrafter"/>
</dbReference>
<dbReference type="GO" id="GO:0002161">
    <property type="term" value="F:aminoacyl-tRNA deacylase activity"/>
    <property type="evidence" value="ECO:0007669"/>
    <property type="project" value="InterPro"/>
</dbReference>
<dbReference type="GO" id="GO:0005524">
    <property type="term" value="F:ATP binding"/>
    <property type="evidence" value="ECO:0007669"/>
    <property type="project" value="UniProtKB-UniRule"/>
</dbReference>
<dbReference type="GO" id="GO:0004827">
    <property type="term" value="F:proline-tRNA ligase activity"/>
    <property type="evidence" value="ECO:0007669"/>
    <property type="project" value="UniProtKB-UniRule"/>
</dbReference>
<dbReference type="GO" id="GO:0006433">
    <property type="term" value="P:prolyl-tRNA aminoacylation"/>
    <property type="evidence" value="ECO:0007669"/>
    <property type="project" value="UniProtKB-UniRule"/>
</dbReference>
<dbReference type="CDD" id="cd04334">
    <property type="entry name" value="ProRS-INS"/>
    <property type="match status" value="1"/>
</dbReference>
<dbReference type="CDD" id="cd00861">
    <property type="entry name" value="ProRS_anticodon_short"/>
    <property type="match status" value="1"/>
</dbReference>
<dbReference type="CDD" id="cd00779">
    <property type="entry name" value="ProRS_core_prok"/>
    <property type="match status" value="1"/>
</dbReference>
<dbReference type="FunFam" id="3.30.930.10:FF:000065">
    <property type="entry name" value="Proline--tRNA ligase"/>
    <property type="match status" value="1"/>
</dbReference>
<dbReference type="FunFam" id="3.30.930.10:FF:000066">
    <property type="entry name" value="Proline--tRNA ligase"/>
    <property type="match status" value="1"/>
</dbReference>
<dbReference type="FunFam" id="3.40.50.800:FF:000051">
    <property type="entry name" value="Proline--tRNA ligase"/>
    <property type="match status" value="1"/>
</dbReference>
<dbReference type="Gene3D" id="3.40.50.800">
    <property type="entry name" value="Anticodon-binding domain"/>
    <property type="match status" value="1"/>
</dbReference>
<dbReference type="Gene3D" id="3.30.930.10">
    <property type="entry name" value="Bira Bifunctional Protein, Domain 2"/>
    <property type="match status" value="2"/>
</dbReference>
<dbReference type="HAMAP" id="MF_01569">
    <property type="entry name" value="Pro_tRNA_synth_type1"/>
    <property type="match status" value="1"/>
</dbReference>
<dbReference type="InterPro" id="IPR002314">
    <property type="entry name" value="aa-tRNA-synt_IIb"/>
</dbReference>
<dbReference type="InterPro" id="IPR006195">
    <property type="entry name" value="aa-tRNA-synth_II"/>
</dbReference>
<dbReference type="InterPro" id="IPR045864">
    <property type="entry name" value="aa-tRNA-synth_II/BPL/LPL"/>
</dbReference>
<dbReference type="InterPro" id="IPR004154">
    <property type="entry name" value="Anticodon-bd"/>
</dbReference>
<dbReference type="InterPro" id="IPR036621">
    <property type="entry name" value="Anticodon-bd_dom_sf"/>
</dbReference>
<dbReference type="InterPro" id="IPR002316">
    <property type="entry name" value="Pro-tRNA-ligase_IIa"/>
</dbReference>
<dbReference type="InterPro" id="IPR004500">
    <property type="entry name" value="Pro-tRNA-synth_IIa_bac-type"/>
</dbReference>
<dbReference type="InterPro" id="IPR023717">
    <property type="entry name" value="Pro-tRNA-Synthase_IIa_type1"/>
</dbReference>
<dbReference type="InterPro" id="IPR050062">
    <property type="entry name" value="Pro-tRNA_synthetase"/>
</dbReference>
<dbReference type="InterPro" id="IPR044140">
    <property type="entry name" value="ProRS_anticodon_short"/>
</dbReference>
<dbReference type="InterPro" id="IPR033730">
    <property type="entry name" value="ProRS_core_prok"/>
</dbReference>
<dbReference type="InterPro" id="IPR036754">
    <property type="entry name" value="YbaK/aa-tRNA-synt-asso_dom_sf"/>
</dbReference>
<dbReference type="InterPro" id="IPR007214">
    <property type="entry name" value="YbaK/aa-tRNA-synth-assoc-dom"/>
</dbReference>
<dbReference type="NCBIfam" id="NF006625">
    <property type="entry name" value="PRK09194.1"/>
    <property type="match status" value="1"/>
</dbReference>
<dbReference type="NCBIfam" id="TIGR00409">
    <property type="entry name" value="proS_fam_II"/>
    <property type="match status" value="1"/>
</dbReference>
<dbReference type="PANTHER" id="PTHR42753">
    <property type="entry name" value="MITOCHONDRIAL RIBOSOME PROTEIN L39/PROLYL-TRNA LIGASE FAMILY MEMBER"/>
    <property type="match status" value="1"/>
</dbReference>
<dbReference type="PANTHER" id="PTHR42753:SF2">
    <property type="entry name" value="PROLINE--TRNA LIGASE"/>
    <property type="match status" value="1"/>
</dbReference>
<dbReference type="Pfam" id="PF03129">
    <property type="entry name" value="HGTP_anticodon"/>
    <property type="match status" value="1"/>
</dbReference>
<dbReference type="Pfam" id="PF00587">
    <property type="entry name" value="tRNA-synt_2b"/>
    <property type="match status" value="2"/>
</dbReference>
<dbReference type="Pfam" id="PF04073">
    <property type="entry name" value="tRNA_edit"/>
    <property type="match status" value="1"/>
</dbReference>
<dbReference type="PRINTS" id="PR01046">
    <property type="entry name" value="TRNASYNTHPRO"/>
</dbReference>
<dbReference type="SUPFAM" id="SSF52954">
    <property type="entry name" value="Class II aaRS ABD-related"/>
    <property type="match status" value="1"/>
</dbReference>
<dbReference type="SUPFAM" id="SSF55681">
    <property type="entry name" value="Class II aaRS and biotin synthetases"/>
    <property type="match status" value="1"/>
</dbReference>
<dbReference type="SUPFAM" id="SSF55826">
    <property type="entry name" value="YbaK/ProRS associated domain"/>
    <property type="match status" value="1"/>
</dbReference>
<dbReference type="PROSITE" id="PS50862">
    <property type="entry name" value="AA_TRNA_LIGASE_II"/>
    <property type="match status" value="1"/>
</dbReference>
<organism>
    <name type="scientific">Helicobacter pylori (strain P12)</name>
    <dbReference type="NCBI Taxonomy" id="570508"/>
    <lineage>
        <taxon>Bacteria</taxon>
        <taxon>Pseudomonadati</taxon>
        <taxon>Campylobacterota</taxon>
        <taxon>Epsilonproteobacteria</taxon>
        <taxon>Campylobacterales</taxon>
        <taxon>Helicobacteraceae</taxon>
        <taxon>Helicobacter</taxon>
    </lineage>
</organism>
<name>SYP_HELP2</name>
<evidence type="ECO:0000255" key="1">
    <source>
        <dbReference type="HAMAP-Rule" id="MF_01569"/>
    </source>
</evidence>
<sequence length="577" mass="65208">MLFSKLFAPTLKEPPKDAVLKSHKHLAQAGYIYQVGSGIYNFLPLAKKVLDKIENITHKRMQEHGAQNILMSFVVLASLWEKSGRLDKYGKELLVFKDRKDNDFVLSPTLEENITEIAANFIKSYKQLPVHLYQIHTKFRDEIRPRFGLVRAREFIMKDGYSFHEDAESLDKEFLNTQSAYKEILSDLGLDFRIVEADSGAIGGSKSREFVVLTECGEDTIVVCQNCDYAANIEIAKRSKRPEPLNVPKAQLAKFPTPNTTSAQSVAEFFKTEPYFVLKALVRKVIHKDKETLACFFVRGDDNLEEVKALNALNIIGANALELREANEEDLNKAGLIAGFIGPYGLKKHVSYIIFDEDLKESDCLIVGANEKDFHAVGVDLKGFENLVYADIVQVKESDRCPNCQGELKYHKSLEVGHIFKLGQGYAKSLKASFLDKNGKEQFFEMGCYGIGISRLLSAILEQKSDDLGCVWTKNTAPFDVVIVVSNLKDEAQKKLAFEVYERLLQKGVDALLDDRDARFGAKMRDFELIGERLALIVGKQTLESKEFECIKRANLEKQTIKDIELEEKILEMLASE</sequence>
<gene>
    <name evidence="1" type="primary">proS</name>
    <name type="ordered locus">HPP12_0238</name>
</gene>
<accession>B6JKG9</accession>
<reference key="1">
    <citation type="submission" date="2008-10" db="EMBL/GenBank/DDBJ databases">
        <title>The complete genome sequence of Helicobacter pylori strain P12.</title>
        <authorList>
            <person name="Fischer W."/>
            <person name="Windhager L."/>
            <person name="Karnholz A."/>
            <person name="Zeiller M."/>
            <person name="Zimmer R."/>
            <person name="Haas R."/>
        </authorList>
    </citation>
    <scope>NUCLEOTIDE SEQUENCE [LARGE SCALE GENOMIC DNA]</scope>
    <source>
        <strain>P12</strain>
    </source>
</reference>
<protein>
    <recommendedName>
        <fullName evidence="1">Proline--tRNA ligase</fullName>
        <ecNumber evidence="1">6.1.1.15</ecNumber>
    </recommendedName>
    <alternativeName>
        <fullName evidence="1">Prolyl-tRNA synthetase</fullName>
        <shortName evidence="1">ProRS</shortName>
    </alternativeName>
</protein>
<keyword id="KW-0030">Aminoacyl-tRNA synthetase</keyword>
<keyword id="KW-0067">ATP-binding</keyword>
<keyword id="KW-0963">Cytoplasm</keyword>
<keyword id="KW-0436">Ligase</keyword>
<keyword id="KW-0547">Nucleotide-binding</keyword>
<keyword id="KW-0648">Protein biosynthesis</keyword>
<comment type="function">
    <text evidence="1">Catalyzes the attachment of proline to tRNA(Pro) in a two-step reaction: proline is first activated by ATP to form Pro-AMP and then transferred to the acceptor end of tRNA(Pro). As ProRS can inadvertently accommodate and process non-cognate amino acids such as alanine and cysteine, to avoid such errors it has two additional distinct editing activities against alanine. One activity is designated as 'pretransfer' editing and involves the tRNA(Pro)-independent hydrolysis of activated Ala-AMP. The other activity is designated 'posttransfer' editing and involves deacylation of mischarged Ala-tRNA(Pro). The misacylated Cys-tRNA(Pro) is not edited by ProRS.</text>
</comment>
<comment type="catalytic activity">
    <reaction evidence="1">
        <text>tRNA(Pro) + L-proline + ATP = L-prolyl-tRNA(Pro) + AMP + diphosphate</text>
        <dbReference type="Rhea" id="RHEA:14305"/>
        <dbReference type="Rhea" id="RHEA-COMP:9700"/>
        <dbReference type="Rhea" id="RHEA-COMP:9702"/>
        <dbReference type="ChEBI" id="CHEBI:30616"/>
        <dbReference type="ChEBI" id="CHEBI:33019"/>
        <dbReference type="ChEBI" id="CHEBI:60039"/>
        <dbReference type="ChEBI" id="CHEBI:78442"/>
        <dbReference type="ChEBI" id="CHEBI:78532"/>
        <dbReference type="ChEBI" id="CHEBI:456215"/>
        <dbReference type="EC" id="6.1.1.15"/>
    </reaction>
</comment>
<comment type="subunit">
    <text evidence="1">Homodimer.</text>
</comment>
<comment type="subcellular location">
    <subcellularLocation>
        <location evidence="1">Cytoplasm</location>
    </subcellularLocation>
</comment>
<comment type="domain">
    <text evidence="1">Consists of three domains: the N-terminal catalytic domain, the editing domain and the C-terminal anticodon-binding domain.</text>
</comment>
<comment type="similarity">
    <text evidence="1">Belongs to the class-II aminoacyl-tRNA synthetase family. ProS type 1 subfamily.</text>
</comment>